<organism>
    <name type="scientific">Vibrio vulnificus (strain YJ016)</name>
    <dbReference type="NCBI Taxonomy" id="196600"/>
    <lineage>
        <taxon>Bacteria</taxon>
        <taxon>Pseudomonadati</taxon>
        <taxon>Pseudomonadota</taxon>
        <taxon>Gammaproteobacteria</taxon>
        <taxon>Vibrionales</taxon>
        <taxon>Vibrionaceae</taxon>
        <taxon>Vibrio</taxon>
    </lineage>
</organism>
<feature type="chain" id="PRO_0000187659" description="Uroporphyrinogen decarboxylase">
    <location>
        <begin position="1"/>
        <end position="355"/>
    </location>
</feature>
<feature type="binding site" evidence="1">
    <location>
        <begin position="27"/>
        <end position="31"/>
    </location>
    <ligand>
        <name>substrate</name>
    </ligand>
</feature>
<feature type="binding site" evidence="1">
    <location>
        <position position="46"/>
    </location>
    <ligand>
        <name>substrate</name>
    </ligand>
</feature>
<feature type="binding site" evidence="1">
    <location>
        <position position="77"/>
    </location>
    <ligand>
        <name>substrate</name>
    </ligand>
</feature>
<feature type="binding site" evidence="1">
    <location>
        <position position="154"/>
    </location>
    <ligand>
        <name>substrate</name>
    </ligand>
</feature>
<feature type="binding site" evidence="1">
    <location>
        <position position="209"/>
    </location>
    <ligand>
        <name>substrate</name>
    </ligand>
</feature>
<feature type="binding site" evidence="1">
    <location>
        <position position="328"/>
    </location>
    <ligand>
        <name>substrate</name>
    </ligand>
</feature>
<feature type="site" description="Transition state stabilizer" evidence="1">
    <location>
        <position position="77"/>
    </location>
</feature>
<keyword id="KW-0963">Cytoplasm</keyword>
<keyword id="KW-0210">Decarboxylase</keyword>
<keyword id="KW-0456">Lyase</keyword>
<keyword id="KW-0627">Porphyrin biosynthesis</keyword>
<reference key="1">
    <citation type="journal article" date="2003" name="Genome Res.">
        <title>Comparative genome analysis of Vibrio vulnificus, a marine pathogen.</title>
        <authorList>
            <person name="Chen C.-Y."/>
            <person name="Wu K.-M."/>
            <person name="Chang Y.-C."/>
            <person name="Chang C.-H."/>
            <person name="Tsai H.-C."/>
            <person name="Liao T.-L."/>
            <person name="Liu Y.-M."/>
            <person name="Chen H.-J."/>
            <person name="Shen A.B.-T."/>
            <person name="Li J.-C."/>
            <person name="Su T.-L."/>
            <person name="Shao C.-P."/>
            <person name="Lee C.-T."/>
            <person name="Hor L.-I."/>
            <person name="Tsai S.-F."/>
        </authorList>
    </citation>
    <scope>NUCLEOTIDE SEQUENCE [LARGE SCALE GENOMIC DNA]</scope>
    <source>
        <strain>YJ016</strain>
    </source>
</reference>
<name>DCUP_VIBVY</name>
<sequence length="355" mass="39213">MTELKNDRYLRALLKEPVDCTPVWMMRQAGRYLPEYKATRAQAGDFMSLCKNAELASEVTLQPLRRFPLDAAILFSDILTIPDAMGLGLRFSTGEGPIFDNPITCKADVEKIGVPDPEGELQYVMNAVRQIRKDLNGDVPLIGFSGSPWTLATYMVEGGSSKAFTKIKKMMYAEPQTLHLLLDKLADSVIEYLNAQIKAGAQSVMVFDTWGGVLTPRDYNLFSLQYMHKIVDGLIRENDGRRVPVTLFTKNGGMWLEQIAATGCDAVGLDWTINIADAKARVGDKVALQGNMDPSMLYASHDRIREEVASILEGFGHGGTGHVFNLGHGIHLDVPPENAGVFVEAVHELSKPYHQ</sequence>
<dbReference type="EC" id="4.1.1.37" evidence="1"/>
<dbReference type="EMBL" id="BA000037">
    <property type="protein sequence ID" value="BAC95914.1"/>
    <property type="molecule type" value="Genomic_DNA"/>
</dbReference>
<dbReference type="RefSeq" id="WP_011079207.1">
    <property type="nucleotide sequence ID" value="NC_005139.1"/>
</dbReference>
<dbReference type="SMR" id="Q7MGS7"/>
<dbReference type="STRING" id="672.VV93_v1c28700"/>
<dbReference type="GeneID" id="93895484"/>
<dbReference type="KEGG" id="vvy:VV3150"/>
<dbReference type="eggNOG" id="COG0407">
    <property type="taxonomic scope" value="Bacteria"/>
</dbReference>
<dbReference type="HOGENOM" id="CLU_040933_0_0_6"/>
<dbReference type="UniPathway" id="UPA00251">
    <property type="reaction ID" value="UER00321"/>
</dbReference>
<dbReference type="Proteomes" id="UP000002675">
    <property type="component" value="Chromosome I"/>
</dbReference>
<dbReference type="GO" id="GO:0005829">
    <property type="term" value="C:cytosol"/>
    <property type="evidence" value="ECO:0007669"/>
    <property type="project" value="TreeGrafter"/>
</dbReference>
<dbReference type="GO" id="GO:0004853">
    <property type="term" value="F:uroporphyrinogen decarboxylase activity"/>
    <property type="evidence" value="ECO:0007669"/>
    <property type="project" value="UniProtKB-UniRule"/>
</dbReference>
<dbReference type="GO" id="GO:0019353">
    <property type="term" value="P:protoporphyrinogen IX biosynthetic process from glutamate"/>
    <property type="evidence" value="ECO:0007669"/>
    <property type="project" value="TreeGrafter"/>
</dbReference>
<dbReference type="CDD" id="cd00717">
    <property type="entry name" value="URO-D"/>
    <property type="match status" value="1"/>
</dbReference>
<dbReference type="FunFam" id="3.20.20.210:FF:000001">
    <property type="entry name" value="Uroporphyrinogen decarboxylase"/>
    <property type="match status" value="1"/>
</dbReference>
<dbReference type="Gene3D" id="3.20.20.210">
    <property type="match status" value="1"/>
</dbReference>
<dbReference type="HAMAP" id="MF_00218">
    <property type="entry name" value="URO_D"/>
    <property type="match status" value="1"/>
</dbReference>
<dbReference type="InterPro" id="IPR038071">
    <property type="entry name" value="UROD/MetE-like_sf"/>
</dbReference>
<dbReference type="InterPro" id="IPR006361">
    <property type="entry name" value="Uroporphyrinogen_deCO2ase_HemE"/>
</dbReference>
<dbReference type="InterPro" id="IPR000257">
    <property type="entry name" value="Uroporphyrinogen_deCOase"/>
</dbReference>
<dbReference type="NCBIfam" id="TIGR01464">
    <property type="entry name" value="hemE"/>
    <property type="match status" value="1"/>
</dbReference>
<dbReference type="PANTHER" id="PTHR21091">
    <property type="entry name" value="METHYLTETRAHYDROFOLATE:HOMOCYSTEINE METHYLTRANSFERASE RELATED"/>
    <property type="match status" value="1"/>
</dbReference>
<dbReference type="PANTHER" id="PTHR21091:SF169">
    <property type="entry name" value="UROPORPHYRINOGEN DECARBOXYLASE"/>
    <property type="match status" value="1"/>
</dbReference>
<dbReference type="Pfam" id="PF01208">
    <property type="entry name" value="URO-D"/>
    <property type="match status" value="1"/>
</dbReference>
<dbReference type="SUPFAM" id="SSF51726">
    <property type="entry name" value="UROD/MetE-like"/>
    <property type="match status" value="1"/>
</dbReference>
<dbReference type="PROSITE" id="PS00906">
    <property type="entry name" value="UROD_1"/>
    <property type="match status" value="1"/>
</dbReference>
<dbReference type="PROSITE" id="PS00907">
    <property type="entry name" value="UROD_2"/>
    <property type="match status" value="1"/>
</dbReference>
<comment type="function">
    <text evidence="1">Catalyzes the decarboxylation of four acetate groups of uroporphyrinogen-III to yield coproporphyrinogen-III.</text>
</comment>
<comment type="catalytic activity">
    <reaction evidence="1">
        <text>uroporphyrinogen III + 4 H(+) = coproporphyrinogen III + 4 CO2</text>
        <dbReference type="Rhea" id="RHEA:19865"/>
        <dbReference type="ChEBI" id="CHEBI:15378"/>
        <dbReference type="ChEBI" id="CHEBI:16526"/>
        <dbReference type="ChEBI" id="CHEBI:57308"/>
        <dbReference type="ChEBI" id="CHEBI:57309"/>
        <dbReference type="EC" id="4.1.1.37"/>
    </reaction>
</comment>
<comment type="pathway">
    <text evidence="1">Porphyrin-containing compound metabolism; protoporphyrin-IX biosynthesis; coproporphyrinogen-III from 5-aminolevulinate: step 4/4.</text>
</comment>
<comment type="subunit">
    <text evidence="1">Homodimer.</text>
</comment>
<comment type="subcellular location">
    <subcellularLocation>
        <location evidence="1">Cytoplasm</location>
    </subcellularLocation>
</comment>
<comment type="similarity">
    <text evidence="1">Belongs to the uroporphyrinogen decarboxylase family.</text>
</comment>
<accession>Q7MGS7</accession>
<protein>
    <recommendedName>
        <fullName evidence="1">Uroporphyrinogen decarboxylase</fullName>
        <shortName evidence="1">UPD</shortName>
        <shortName evidence="1">URO-D</shortName>
        <ecNumber evidence="1">4.1.1.37</ecNumber>
    </recommendedName>
</protein>
<gene>
    <name evidence="1" type="primary">hemE</name>
    <name type="ordered locus">VV3150</name>
</gene>
<evidence type="ECO:0000255" key="1">
    <source>
        <dbReference type="HAMAP-Rule" id="MF_00218"/>
    </source>
</evidence>
<proteinExistence type="inferred from homology"/>